<reference key="1">
    <citation type="journal article" date="2005" name="J. Bacteriol.">
        <title>Insights into genome plasticity and pathogenicity of the plant pathogenic Bacterium Xanthomonas campestris pv. vesicatoria revealed by the complete genome sequence.</title>
        <authorList>
            <person name="Thieme F."/>
            <person name="Koebnik R."/>
            <person name="Bekel T."/>
            <person name="Berger C."/>
            <person name="Boch J."/>
            <person name="Buettner D."/>
            <person name="Caldana C."/>
            <person name="Gaigalat L."/>
            <person name="Goesmann A."/>
            <person name="Kay S."/>
            <person name="Kirchner O."/>
            <person name="Lanz C."/>
            <person name="Linke B."/>
            <person name="McHardy A.C."/>
            <person name="Meyer F."/>
            <person name="Mittenhuber G."/>
            <person name="Nies D.H."/>
            <person name="Niesbach-Kloesgen U."/>
            <person name="Patschkowski T."/>
            <person name="Rueckert C."/>
            <person name="Rupp O."/>
            <person name="Schneiker S."/>
            <person name="Schuster S.C."/>
            <person name="Vorhoelter F.J."/>
            <person name="Weber E."/>
            <person name="Puehler A."/>
            <person name="Bonas U."/>
            <person name="Bartels D."/>
            <person name="Kaiser O."/>
        </authorList>
    </citation>
    <scope>NUCLEOTIDE SEQUENCE [LARGE SCALE GENOMIC DNA]</scope>
    <source>
        <strain>85-10</strain>
    </source>
</reference>
<organism>
    <name type="scientific">Xanthomonas euvesicatoria pv. vesicatoria (strain 85-10)</name>
    <name type="common">Xanthomonas campestris pv. vesicatoria</name>
    <dbReference type="NCBI Taxonomy" id="316273"/>
    <lineage>
        <taxon>Bacteria</taxon>
        <taxon>Pseudomonadati</taxon>
        <taxon>Pseudomonadota</taxon>
        <taxon>Gammaproteobacteria</taxon>
        <taxon>Lysobacterales</taxon>
        <taxon>Lysobacteraceae</taxon>
        <taxon>Xanthomonas</taxon>
    </lineage>
</organism>
<dbReference type="EMBL" id="AM039952">
    <property type="protein sequence ID" value="CAJ22638.1"/>
    <property type="molecule type" value="Genomic_DNA"/>
</dbReference>
<dbReference type="RefSeq" id="WP_003486703.1">
    <property type="nucleotide sequence ID" value="NZ_CP017190.1"/>
</dbReference>
<dbReference type="SMR" id="Q3BWX5"/>
<dbReference type="STRING" id="456327.BJD11_17700"/>
<dbReference type="GeneID" id="97509344"/>
<dbReference type="KEGG" id="xcv:XCV1007"/>
<dbReference type="eggNOG" id="COG0255">
    <property type="taxonomic scope" value="Bacteria"/>
</dbReference>
<dbReference type="HOGENOM" id="CLU_158491_1_2_6"/>
<dbReference type="Proteomes" id="UP000007069">
    <property type="component" value="Chromosome"/>
</dbReference>
<dbReference type="GO" id="GO:0022625">
    <property type="term" value="C:cytosolic large ribosomal subunit"/>
    <property type="evidence" value="ECO:0007669"/>
    <property type="project" value="TreeGrafter"/>
</dbReference>
<dbReference type="GO" id="GO:0003735">
    <property type="term" value="F:structural constituent of ribosome"/>
    <property type="evidence" value="ECO:0007669"/>
    <property type="project" value="InterPro"/>
</dbReference>
<dbReference type="GO" id="GO:0006412">
    <property type="term" value="P:translation"/>
    <property type="evidence" value="ECO:0007669"/>
    <property type="project" value="UniProtKB-UniRule"/>
</dbReference>
<dbReference type="CDD" id="cd00427">
    <property type="entry name" value="Ribosomal_L29_HIP"/>
    <property type="match status" value="1"/>
</dbReference>
<dbReference type="FunFam" id="1.10.287.310:FF:000001">
    <property type="entry name" value="50S ribosomal protein L29"/>
    <property type="match status" value="1"/>
</dbReference>
<dbReference type="Gene3D" id="1.10.287.310">
    <property type="match status" value="1"/>
</dbReference>
<dbReference type="HAMAP" id="MF_00374">
    <property type="entry name" value="Ribosomal_uL29"/>
    <property type="match status" value="1"/>
</dbReference>
<dbReference type="InterPro" id="IPR050063">
    <property type="entry name" value="Ribosomal_protein_uL29"/>
</dbReference>
<dbReference type="InterPro" id="IPR001854">
    <property type="entry name" value="Ribosomal_uL29"/>
</dbReference>
<dbReference type="InterPro" id="IPR036049">
    <property type="entry name" value="Ribosomal_uL29_sf"/>
</dbReference>
<dbReference type="NCBIfam" id="TIGR00012">
    <property type="entry name" value="L29"/>
    <property type="match status" value="1"/>
</dbReference>
<dbReference type="PANTHER" id="PTHR10916">
    <property type="entry name" value="60S RIBOSOMAL PROTEIN L35/50S RIBOSOMAL PROTEIN L29"/>
    <property type="match status" value="1"/>
</dbReference>
<dbReference type="PANTHER" id="PTHR10916:SF0">
    <property type="entry name" value="LARGE RIBOSOMAL SUBUNIT PROTEIN UL29C"/>
    <property type="match status" value="1"/>
</dbReference>
<dbReference type="Pfam" id="PF00831">
    <property type="entry name" value="Ribosomal_L29"/>
    <property type="match status" value="1"/>
</dbReference>
<dbReference type="SUPFAM" id="SSF46561">
    <property type="entry name" value="Ribosomal protein L29 (L29p)"/>
    <property type="match status" value="1"/>
</dbReference>
<comment type="similarity">
    <text evidence="1">Belongs to the universal ribosomal protein uL29 family.</text>
</comment>
<protein>
    <recommendedName>
        <fullName evidence="1">Large ribosomal subunit protein uL29</fullName>
    </recommendedName>
    <alternativeName>
        <fullName evidence="2">50S ribosomal protein L29</fullName>
    </alternativeName>
</protein>
<proteinExistence type="inferred from homology"/>
<keyword id="KW-0687">Ribonucleoprotein</keyword>
<keyword id="KW-0689">Ribosomal protein</keyword>
<name>RL29_XANE5</name>
<feature type="chain" id="PRO_1000007653" description="Large ribosomal subunit protein uL29">
    <location>
        <begin position="1"/>
        <end position="61"/>
    </location>
</feature>
<gene>
    <name evidence="1" type="primary">rpmC</name>
    <name type="ordered locus">XCV1007</name>
</gene>
<sequence length="61" mass="7237">MDIKQLREKSADELKAHLTDLRKEQFSLRMQQVTGQLPKTHETRRVRREIARVKHLLGSTK</sequence>
<accession>Q3BWX5</accession>
<evidence type="ECO:0000255" key="1">
    <source>
        <dbReference type="HAMAP-Rule" id="MF_00374"/>
    </source>
</evidence>
<evidence type="ECO:0000305" key="2"/>